<protein>
    <recommendedName>
        <fullName evidence="1">Hydroxyethylthiazole kinase</fullName>
        <ecNumber evidence="1">2.7.1.50</ecNumber>
    </recommendedName>
    <alternativeName>
        <fullName evidence="1">4-methyl-5-beta-hydroxyethylthiazole kinase</fullName>
        <shortName evidence="1">TH kinase</shortName>
        <shortName evidence="1">Thz kinase</shortName>
    </alternativeName>
</protein>
<reference key="1">
    <citation type="journal article" date="2006" name="BMC Genomics">
        <title>The genome of the square archaeon Haloquadratum walsbyi: life at the limits of water activity.</title>
        <authorList>
            <person name="Bolhuis H."/>
            <person name="Palm P."/>
            <person name="Wende A."/>
            <person name="Falb M."/>
            <person name="Rampp M."/>
            <person name="Rodriguez-Valera F."/>
            <person name="Pfeiffer F."/>
            <person name="Oesterhelt D."/>
        </authorList>
    </citation>
    <scope>NUCLEOTIDE SEQUENCE [LARGE SCALE GENOMIC DNA]</scope>
    <source>
        <strain>DSM 16790 / HBSQ001</strain>
    </source>
</reference>
<sequence length="288" mass="29352">MNEDTTTLVEETNTTTQAALRQLSQTTPLVNAITNDVTVNQVANIILHWGGLPVMSDDVRELDEMVNAAEACLLNMGTVSETGEEAMMTAGQAASEHDAGLVLDPVGAGATATRSRVAERLSTTLDVDVINGNRGEVAALVGEDAEVRGVESVGEHPDAAETAIACAQHTEAVVVSSGVTDIVATAETAFELNVGDEMLGTLVGTGCMLGGTIAAFCGGLDDPLTAALTGTVAFGLAGEAAANGEFGEYAGPASYETTVLDAAAGTDPEMIAAVDIDNRVNRVLAEAK</sequence>
<feature type="chain" id="PRO_0000383913" description="Hydroxyethylthiazole kinase">
    <location>
        <begin position="1"/>
        <end position="288"/>
    </location>
</feature>
<feature type="binding site" evidence="1">
    <location>
        <position position="55"/>
    </location>
    <ligand>
        <name>substrate</name>
    </ligand>
</feature>
<feature type="binding site" evidence="1">
    <location>
        <position position="131"/>
    </location>
    <ligand>
        <name>ATP</name>
        <dbReference type="ChEBI" id="CHEBI:30616"/>
    </ligand>
</feature>
<feature type="binding site" evidence="1">
    <location>
        <position position="177"/>
    </location>
    <ligand>
        <name>ATP</name>
        <dbReference type="ChEBI" id="CHEBI:30616"/>
    </ligand>
</feature>
<feature type="binding site" evidence="1">
    <location>
        <position position="204"/>
    </location>
    <ligand>
        <name>substrate</name>
    </ligand>
</feature>
<name>THIM_HALWD</name>
<organism>
    <name type="scientific">Haloquadratum walsbyi (strain DSM 16790 / HBSQ001)</name>
    <dbReference type="NCBI Taxonomy" id="362976"/>
    <lineage>
        <taxon>Archaea</taxon>
        <taxon>Methanobacteriati</taxon>
        <taxon>Methanobacteriota</taxon>
        <taxon>Stenosarchaea group</taxon>
        <taxon>Halobacteria</taxon>
        <taxon>Halobacteriales</taxon>
        <taxon>Haloferacaceae</taxon>
        <taxon>Haloquadratum</taxon>
    </lineage>
</organism>
<keyword id="KW-0067">ATP-binding</keyword>
<keyword id="KW-0418">Kinase</keyword>
<keyword id="KW-0460">Magnesium</keyword>
<keyword id="KW-0479">Metal-binding</keyword>
<keyword id="KW-0547">Nucleotide-binding</keyword>
<keyword id="KW-1185">Reference proteome</keyword>
<keyword id="KW-0784">Thiamine biosynthesis</keyword>
<keyword id="KW-0808">Transferase</keyword>
<comment type="function">
    <text evidence="1">Catalyzes the phosphorylation of the hydroxyl group of 4-methyl-5-beta-hydroxyethylthiazole (THZ).</text>
</comment>
<comment type="catalytic activity">
    <reaction evidence="1">
        <text>5-(2-hydroxyethyl)-4-methylthiazole + ATP = 4-methyl-5-(2-phosphooxyethyl)-thiazole + ADP + H(+)</text>
        <dbReference type="Rhea" id="RHEA:24212"/>
        <dbReference type="ChEBI" id="CHEBI:15378"/>
        <dbReference type="ChEBI" id="CHEBI:17957"/>
        <dbReference type="ChEBI" id="CHEBI:30616"/>
        <dbReference type="ChEBI" id="CHEBI:58296"/>
        <dbReference type="ChEBI" id="CHEBI:456216"/>
        <dbReference type="EC" id="2.7.1.50"/>
    </reaction>
</comment>
<comment type="cofactor">
    <cofactor evidence="1">
        <name>Mg(2+)</name>
        <dbReference type="ChEBI" id="CHEBI:18420"/>
    </cofactor>
</comment>
<comment type="pathway">
    <text evidence="1">Cofactor biosynthesis; thiamine diphosphate biosynthesis; 4-methyl-5-(2-phosphoethyl)-thiazole from 5-(2-hydroxyethyl)-4-methylthiazole: step 1/1.</text>
</comment>
<comment type="similarity">
    <text evidence="1">Belongs to the Thz kinase family.</text>
</comment>
<gene>
    <name evidence="1" type="primary">thiM</name>
    <name type="ordered locus">HQ_2656A</name>
</gene>
<proteinExistence type="inferred from homology"/>
<accession>Q18GX8</accession>
<evidence type="ECO:0000255" key="1">
    <source>
        <dbReference type="HAMAP-Rule" id="MF_00228"/>
    </source>
</evidence>
<dbReference type="EC" id="2.7.1.50" evidence="1"/>
<dbReference type="EMBL" id="AM180088">
    <property type="protein sequence ID" value="CAJ52767.1"/>
    <property type="molecule type" value="Genomic_DNA"/>
</dbReference>
<dbReference type="RefSeq" id="WP_011571883.1">
    <property type="nucleotide sequence ID" value="NC_008212.1"/>
</dbReference>
<dbReference type="SMR" id="Q18GX8"/>
<dbReference type="STRING" id="362976.HQ_2656A"/>
<dbReference type="GeneID" id="4194768"/>
<dbReference type="KEGG" id="hwa:HQ_2656A"/>
<dbReference type="eggNOG" id="arCOG00019">
    <property type="taxonomic scope" value="Archaea"/>
</dbReference>
<dbReference type="HOGENOM" id="CLU_019943_0_0_2"/>
<dbReference type="UniPathway" id="UPA00060">
    <property type="reaction ID" value="UER00139"/>
</dbReference>
<dbReference type="Proteomes" id="UP000001975">
    <property type="component" value="Chromosome"/>
</dbReference>
<dbReference type="GO" id="GO:0005524">
    <property type="term" value="F:ATP binding"/>
    <property type="evidence" value="ECO:0007669"/>
    <property type="project" value="UniProtKB-UniRule"/>
</dbReference>
<dbReference type="GO" id="GO:0004417">
    <property type="term" value="F:hydroxyethylthiazole kinase activity"/>
    <property type="evidence" value="ECO:0007669"/>
    <property type="project" value="UniProtKB-UniRule"/>
</dbReference>
<dbReference type="GO" id="GO:0000287">
    <property type="term" value="F:magnesium ion binding"/>
    <property type="evidence" value="ECO:0007669"/>
    <property type="project" value="UniProtKB-UniRule"/>
</dbReference>
<dbReference type="GO" id="GO:0009228">
    <property type="term" value="P:thiamine biosynthetic process"/>
    <property type="evidence" value="ECO:0007669"/>
    <property type="project" value="UniProtKB-KW"/>
</dbReference>
<dbReference type="GO" id="GO:0009229">
    <property type="term" value="P:thiamine diphosphate biosynthetic process"/>
    <property type="evidence" value="ECO:0007669"/>
    <property type="project" value="UniProtKB-UniRule"/>
</dbReference>
<dbReference type="CDD" id="cd01170">
    <property type="entry name" value="THZ_kinase"/>
    <property type="match status" value="1"/>
</dbReference>
<dbReference type="Gene3D" id="3.40.1190.20">
    <property type="match status" value="1"/>
</dbReference>
<dbReference type="HAMAP" id="MF_00228">
    <property type="entry name" value="Thz_kinase"/>
    <property type="match status" value="1"/>
</dbReference>
<dbReference type="InterPro" id="IPR000417">
    <property type="entry name" value="Hyethyz_kinase"/>
</dbReference>
<dbReference type="InterPro" id="IPR029056">
    <property type="entry name" value="Ribokinase-like"/>
</dbReference>
<dbReference type="NCBIfam" id="NF006830">
    <property type="entry name" value="PRK09355.1"/>
    <property type="match status" value="1"/>
</dbReference>
<dbReference type="Pfam" id="PF02110">
    <property type="entry name" value="HK"/>
    <property type="match status" value="1"/>
</dbReference>
<dbReference type="PIRSF" id="PIRSF000513">
    <property type="entry name" value="Thz_kinase"/>
    <property type="match status" value="1"/>
</dbReference>
<dbReference type="PRINTS" id="PR01099">
    <property type="entry name" value="HYETHTZKNASE"/>
</dbReference>
<dbReference type="SUPFAM" id="SSF53613">
    <property type="entry name" value="Ribokinase-like"/>
    <property type="match status" value="1"/>
</dbReference>